<sequence length="579" mass="63865">MVRSMPLRGGRPQAPTAPTRWQLQNTVFAAESQNQPSASEAVVSSTRDAALQRRRALTTDGKAATLVQGSVGGGRVRSARDQRQPGWVRRDKGATSGVPFNLSRSSLPITNRQHPLTDTAANARLRAYEQEVKGRFDRIVPLLQRVSALQHEPDFIEQAQRLTRAELGFDLPQHILERAWVRPLDMRALFAWCVFESHRLFSDRFFQDDPLDGAAGSVAARDFEQFLLDCGIHLLDVSPCADGRLAHTVAYALRIPFSAVRRRSHAGAMFDVENTVNRWVKTEHRRHREGMPNPSTEPTRYLKVVTYHFSSLDPQHQGCAAHGSNDELAAAAGHQRLLDFREAVENSFCCGASVDLLLIGLDTDTDAIRVHPPSRDSEMVLDQWLCARELHAATASMTADQAMAQIAEAIEAGASGPMEPGMVAFLTRLIANNCSQIDYVQDLHGAPYPDAGHAERFIGVGIGFKEVHLRNLTYFAHLDTVEEGAPDLDVGVKIFKGLNVSRDLPIPVVVRFDYSGRVPGARERAIADCQRVNQAIADRYGELVNQGLLHTCLTVRDRNQTAPAEVVGSTLAPPLQEAH</sequence>
<reference key="1">
    <citation type="journal article" date="2003" name="Nature">
        <title>The genome of a motile marine Synechococcus.</title>
        <authorList>
            <person name="Palenik B."/>
            <person name="Brahamsha B."/>
            <person name="Larimer F.W."/>
            <person name="Land M.L."/>
            <person name="Hauser L."/>
            <person name="Chain P."/>
            <person name="Lamerdin J.E."/>
            <person name="Regala W."/>
            <person name="Allen E.E."/>
            <person name="McCarren J."/>
            <person name="Paulsen I.T."/>
            <person name="Dufresne A."/>
            <person name="Partensky F."/>
            <person name="Webb E.A."/>
            <person name="Waterbury J."/>
        </authorList>
    </citation>
    <scope>NUCLEOTIDE SEQUENCE [LARGE SCALE GENOMIC DNA]</scope>
    <source>
        <strain>WH8102</strain>
    </source>
</reference>
<reference key="2">
    <citation type="journal article" date="2004" name="J. Bacteriol.">
        <title>A novel evolutionary lineage of carbonic anhydrase (epsilon class) is a component of the carboxysome shell.</title>
        <authorList>
            <person name="So A.K."/>
            <person name="Espie G.S."/>
            <person name="Williams E.B."/>
            <person name="Shively J.M."/>
            <person name="Heinhorst S."/>
            <person name="Cannon G.C."/>
        </authorList>
    </citation>
    <scope>FUNCTION AS A CARBONIC ANHYDRASE</scope>
    <scope>CATALYTIC ACTIVITY</scope>
    <source>
        <strain>WH8102</strain>
    </source>
</reference>
<reference key="3">
    <citation type="journal article" date="2005" name="Can. J. Bot.">
        <title>Cyanobacterial carbonic anhydrases.</title>
        <authorList>
            <person name="So A.K."/>
            <person name="Espie G.S."/>
        </authorList>
    </citation>
    <scope>FUNCTION AS A CARBONIC ANHYDRASE</scope>
    <scope>CATALYTIC ACTIVITY</scope>
    <scope>SUBCELLULAR LOCATION</scope>
</reference>
<reference key="4">
    <citation type="journal article" date="2019" name="Front. Microbiol.">
        <title>Proteomic Response to Rising Temperature in the Marine Cyanobacterium Synechococcus Grown in Different Nitrogen Sources.</title>
        <authorList>
            <person name="Li Y.Y."/>
            <person name="Chen X.H."/>
            <person name="Xue C."/>
            <person name="Zhang H."/>
            <person name="Sun G."/>
            <person name="Xie Z.X."/>
            <person name="Lin L."/>
            <person name="Wang D.Z."/>
        </authorList>
    </citation>
    <scope>IDENTIFICATION BY MASS SPECTROMETRY</scope>
    <scope>INDUCTION</scope>
    <source>
        <strain>WH8102</strain>
    </source>
</reference>
<name>CSOCA_PARMW</name>
<evidence type="ECO:0000250" key="1">
    <source>
        <dbReference type="UniProtKB" id="O85042"/>
    </source>
</evidence>
<evidence type="ECO:0000256" key="2">
    <source>
        <dbReference type="SAM" id="MobiDB-lite"/>
    </source>
</evidence>
<evidence type="ECO:0000269" key="3">
    <source>
    </source>
</evidence>
<evidence type="ECO:0000269" key="4">
    <source>
    </source>
</evidence>
<evidence type="ECO:0000269" key="5">
    <source ref="3"/>
</evidence>
<evidence type="ECO:0000303" key="6">
    <source>
    </source>
</evidence>
<evidence type="ECO:0000303" key="7">
    <source ref="3"/>
</evidence>
<evidence type="ECO:0000305" key="8"/>
<evidence type="ECO:0000305" key="9">
    <source>
    </source>
</evidence>
<evidence type="ECO:0000305" key="10">
    <source ref="3"/>
</evidence>
<organism>
    <name type="scientific">Parasynechococcus marenigrum (strain WH8102)</name>
    <dbReference type="NCBI Taxonomy" id="84588"/>
    <lineage>
        <taxon>Bacteria</taxon>
        <taxon>Bacillati</taxon>
        <taxon>Cyanobacteriota</taxon>
        <taxon>Cyanophyceae</taxon>
        <taxon>Synechococcales</taxon>
        <taxon>Prochlorococcaceae</taxon>
        <taxon>Parasynechococcus</taxon>
        <taxon>Parasynechococcus marenigrum</taxon>
    </lineage>
</organism>
<feature type="chain" id="PRO_0000452066" description="Carboxysome shell carbonic anhydrase">
    <location>
        <begin position="1"/>
        <end position="579"/>
    </location>
</feature>
<feature type="region of interest" description="Disordered" evidence="2">
    <location>
        <begin position="72"/>
        <end position="95"/>
    </location>
</feature>
<feature type="compositionally biased region" description="Basic and acidic residues" evidence="2">
    <location>
        <begin position="78"/>
        <end position="93"/>
    </location>
</feature>
<feature type="active site" description="Proton acceptor" evidence="1">
    <location>
        <position position="242"/>
    </location>
</feature>
<feature type="binding site" evidence="1">
    <location>
        <position position="240"/>
    </location>
    <ligand>
        <name>Zn(2+)</name>
        <dbReference type="ChEBI" id="CHEBI:29105"/>
        <note>catalytic</note>
    </ligand>
</feature>
<feature type="binding site" evidence="1">
    <location>
        <position position="308"/>
    </location>
    <ligand>
        <name>Zn(2+)</name>
        <dbReference type="ChEBI" id="CHEBI:29105"/>
        <note>catalytic</note>
    </ligand>
</feature>
<feature type="binding site" evidence="1">
    <location>
        <position position="319"/>
    </location>
    <ligand>
        <name>Zn(2+)</name>
        <dbReference type="ChEBI" id="CHEBI:29105"/>
        <note>catalytic</note>
    </ligand>
</feature>
<keyword id="KW-1283">Bacterial microcompartment</keyword>
<keyword id="KW-0120">Carbon dioxide fixation</keyword>
<keyword id="KW-1282">Carboxysome</keyword>
<keyword id="KW-0456">Lyase</keyword>
<keyword id="KW-0479">Metal-binding</keyword>
<keyword id="KW-0602">Photosynthesis</keyword>
<keyword id="KW-0862">Zinc</keyword>
<accession>Q7TTT8</accession>
<proteinExistence type="evidence at protein level"/>
<gene>
    <name evidence="6" type="primary">csoS3</name>
    <name type="ordered locus">SYNW1715</name>
</gene>
<comment type="function">
    <text evidence="3 5 9 10">Reversible hydration of carbon dioxide (PubMed:14729686, Ref.3). Essential for photosynthetic carbon dioxide fixation, supplies CO(2) to RuBisCO (ribulose bisphosphate carboxylase, cbbL-cbbS) in the carboxysome (Probable).</text>
</comment>
<comment type="catalytic activity">
    <reaction evidence="3 5">
        <text>hydrogencarbonate + H(+) = CO2 + H2O</text>
        <dbReference type="Rhea" id="RHEA:10748"/>
        <dbReference type="ChEBI" id="CHEBI:15377"/>
        <dbReference type="ChEBI" id="CHEBI:15378"/>
        <dbReference type="ChEBI" id="CHEBI:16526"/>
        <dbReference type="ChEBI" id="CHEBI:17544"/>
        <dbReference type="EC" id="4.2.1.1"/>
    </reaction>
</comment>
<comment type="cofactor">
    <cofactor evidence="1">
        <name>Zn(2+)</name>
        <dbReference type="ChEBI" id="CHEBI:29105"/>
    </cofactor>
    <text evidence="1">Binds 1 Zn(2+) per monomer.</text>
</comment>
<comment type="activity regulation">
    <text evidence="5">Inhibited by dithiothreitol, partially inhibited by acetatzolamide and cyanide.</text>
</comment>
<comment type="subunit">
    <text evidence="1">Homodimer.</text>
</comment>
<comment type="subcellular location">
    <subcellularLocation>
        <location evidence="7">Carboxysome</location>
    </subcellularLocation>
    <text evidence="8">This cyanobacterium makes alpha-type carboxysomes.</text>
</comment>
<comment type="induction">
    <text evidence="4">Carbonic anhydrase activity of nitrate- and urea-grown cells decreases with rising temperature (from 25 to 28 degrees Celsius, present versus predicted future ocean temperatures); there is probably more than one carbonic anhydrase in this cyanobacteria.</text>
</comment>
<comment type="similarity">
    <text evidence="9">Belongs to the beta-class carbonic anhydrase family. CsoSCA subfamily.</text>
</comment>
<protein>
    <recommendedName>
        <fullName evidence="6">Carboxysome shell carbonic anhydrase</fullName>
        <shortName evidence="8">CsoSCA</shortName>
        <ecNumber evidence="3 5">4.2.1.1</ecNumber>
    </recommendedName>
    <alternativeName>
        <fullName evidence="6">Carbonic anhydrase</fullName>
        <shortName evidence="6">CA</shortName>
    </alternativeName>
    <alternativeName>
        <fullName evidence="6">Carboxysome shell protein CsoS3</fullName>
    </alternativeName>
</protein>
<dbReference type="EC" id="4.2.1.1" evidence="3 5"/>
<dbReference type="EMBL" id="BX569693">
    <property type="protein sequence ID" value="CAE08230.1"/>
    <property type="molecule type" value="Genomic_DNA"/>
</dbReference>
<dbReference type="RefSeq" id="WP_011128577.1">
    <property type="nucleotide sequence ID" value="NC_005070.1"/>
</dbReference>
<dbReference type="SMR" id="Q7TTT8"/>
<dbReference type="STRING" id="84588.SYNW1715"/>
<dbReference type="KEGG" id="syw:SYNW1715"/>
<dbReference type="eggNOG" id="ENOG502Z9V7">
    <property type="taxonomic scope" value="Bacteria"/>
</dbReference>
<dbReference type="HOGENOM" id="CLU_535194_0_0_3"/>
<dbReference type="Proteomes" id="UP000001422">
    <property type="component" value="Chromosome"/>
</dbReference>
<dbReference type="GO" id="GO:0031470">
    <property type="term" value="C:carboxysome"/>
    <property type="evidence" value="ECO:0007669"/>
    <property type="project" value="UniProtKB-SubCell"/>
</dbReference>
<dbReference type="GO" id="GO:0004089">
    <property type="term" value="F:carbonate dehydratase activity"/>
    <property type="evidence" value="ECO:0007669"/>
    <property type="project" value="UniProtKB-EC"/>
</dbReference>
<dbReference type="GO" id="GO:0046872">
    <property type="term" value="F:metal ion binding"/>
    <property type="evidence" value="ECO:0007669"/>
    <property type="project" value="UniProtKB-KW"/>
</dbReference>
<dbReference type="GO" id="GO:0015977">
    <property type="term" value="P:carbon fixation"/>
    <property type="evidence" value="ECO:0007669"/>
    <property type="project" value="UniProtKB-KW"/>
</dbReference>
<dbReference type="GO" id="GO:0015979">
    <property type="term" value="P:photosynthesis"/>
    <property type="evidence" value="ECO:0007669"/>
    <property type="project" value="UniProtKB-KW"/>
</dbReference>
<dbReference type="Gene3D" id="3.30.1330.140">
    <property type="entry name" value="Carboxysome Shell Carbonic Anhydrase, C-terminal domain"/>
    <property type="match status" value="1"/>
</dbReference>
<dbReference type="Gene3D" id="1.20.120.1310">
    <property type="entry name" value="Carboxysome Shell Carbonic Anhydrase, N-terminal helical domain"/>
    <property type="match status" value="1"/>
</dbReference>
<dbReference type="InterPro" id="IPR014074">
    <property type="entry name" value="Carboxysome_shell_carb_anhy"/>
</dbReference>
<dbReference type="InterPro" id="IPR048620">
    <property type="entry name" value="CsoSCA_C"/>
</dbReference>
<dbReference type="InterPro" id="IPR043066">
    <property type="entry name" value="CsoSCA_C_sf"/>
</dbReference>
<dbReference type="InterPro" id="IPR048539">
    <property type="entry name" value="CsoSCA_cat"/>
</dbReference>
<dbReference type="InterPro" id="IPR048619">
    <property type="entry name" value="CsoSCA_N"/>
</dbReference>
<dbReference type="InterPro" id="IPR043065">
    <property type="entry name" value="CsoSCA_N_sf"/>
</dbReference>
<dbReference type="NCBIfam" id="TIGR02701">
    <property type="entry name" value="shell_carb_anhy"/>
    <property type="match status" value="1"/>
</dbReference>
<dbReference type="Pfam" id="PF08936">
    <property type="entry name" value="CsoSCA_C"/>
    <property type="match status" value="1"/>
</dbReference>
<dbReference type="Pfam" id="PF20686">
    <property type="entry name" value="CsoSCA_cat"/>
    <property type="match status" value="1"/>
</dbReference>
<dbReference type="Pfam" id="PF20687">
    <property type="entry name" value="CsoSCA_N"/>
    <property type="match status" value="1"/>
</dbReference>